<evidence type="ECO:0000250" key="1"/>
<evidence type="ECO:0000250" key="2">
    <source>
        <dbReference type="UniProtKB" id="P36915"/>
    </source>
</evidence>
<evidence type="ECO:0000255" key="3"/>
<evidence type="ECO:0000255" key="4">
    <source>
        <dbReference type="PROSITE-ProRule" id="PRU01058"/>
    </source>
</evidence>
<evidence type="ECO:0000256" key="5">
    <source>
        <dbReference type="SAM" id="MobiDB-lite"/>
    </source>
</evidence>
<evidence type="ECO:0000305" key="6"/>
<name>GNL1_PANTR</name>
<gene>
    <name type="primary">GNL1</name>
</gene>
<sequence length="607" mass="68675">MPRKKPFSVKQKKKQLQDKRERKRGLQDGLRSSSNSRSGSRERREEQTDTSDGESVTHHIRRLNQQPSQGLGPRGYDPNRYRLHFERDSREEVERRKRAAREQVLQPVSAEVLELDIREVYQPGSVLDFPRRPPWSYEMSKEQLMSQEERSFQDYLGKIHGAYSSEKLSYFEHNLETWRQLWRVLEMSDIVLLITDIRHPVVNFPPALYEYVTGELGLALVLVLNKVDLAPPALVVAWKHYFHQHYPQLHVVLFTSFPRDPRTPQDPSSVLKKSRRRGRGWTRALGPEQLLRACEAITVGKVDLSSWREKIARDVAGATWGNGSGEEEEEEDGPAVLVEQQTDSAMEPTGPTRERYKDGVVTIGCVGFPNVGKSSLINGLVGRKVVSVSRTPGHTRYFQTYFLTPSVKLCDCPGLIFPSLLPRQLQVLAGIYPIAQIQEPYTAVGYLASRIPVQALLHLRHPEAEDPSAEHPWCAWDICEAWAEKRGYKTAKAARNDVYRAANSLLRLAVDGRLSLCFHPPGYSEQKGTWESHPETTELVVLQGRVGPAGDEEEEEEEELSSSCEEEGEEDRDADEEGEGDEETPTSAPGSSLAGRNPYALLGEDEC</sequence>
<protein>
    <recommendedName>
        <fullName>Guanine nucleotide-binding protein-like 1</fullName>
    </recommendedName>
</protein>
<proteinExistence type="inferred from homology"/>
<dbReference type="EMBL" id="BA000041">
    <property type="protein sequence ID" value="BAC78181.1"/>
    <property type="status" value="ALT_SEQ"/>
    <property type="molecule type" value="Genomic_DNA"/>
</dbReference>
<dbReference type="EMBL" id="AB210191">
    <property type="protein sequence ID" value="BAE92806.1"/>
    <property type="molecule type" value="Genomic_DNA"/>
</dbReference>
<dbReference type="EMBL" id="AB210192">
    <property type="protein sequence ID" value="BAE92808.1"/>
    <property type="molecule type" value="Genomic_DNA"/>
</dbReference>
<dbReference type="RefSeq" id="NP_001065264.1">
    <molecule id="Q7YR35-1"/>
    <property type="nucleotide sequence ID" value="NM_001071796.1"/>
</dbReference>
<dbReference type="FunCoup" id="Q7YR35">
    <property type="interactions" value="1341"/>
</dbReference>
<dbReference type="STRING" id="9598.ENSPTRP00000070705"/>
<dbReference type="PaxDb" id="9598-ENSPTRP00000030580"/>
<dbReference type="GeneID" id="462541"/>
<dbReference type="KEGG" id="ptr:462541"/>
<dbReference type="CTD" id="2794"/>
<dbReference type="eggNOG" id="KOG1424">
    <property type="taxonomic scope" value="Eukaryota"/>
</dbReference>
<dbReference type="HOGENOM" id="CLU_013649_1_1_1"/>
<dbReference type="InParanoid" id="Q7YR35"/>
<dbReference type="OrthoDB" id="9502at9604"/>
<dbReference type="TreeFam" id="TF324569"/>
<dbReference type="Proteomes" id="UP000002277">
    <property type="component" value="Unplaced"/>
</dbReference>
<dbReference type="GO" id="GO:0005525">
    <property type="term" value="F:GTP binding"/>
    <property type="evidence" value="ECO:0007669"/>
    <property type="project" value="UniProtKB-KW"/>
</dbReference>
<dbReference type="GO" id="GO:0003924">
    <property type="term" value="F:GTPase activity"/>
    <property type="evidence" value="ECO:0000318"/>
    <property type="project" value="GO_Central"/>
</dbReference>
<dbReference type="CDD" id="cd01857">
    <property type="entry name" value="HSR1_MMR1"/>
    <property type="match status" value="1"/>
</dbReference>
<dbReference type="Gene3D" id="3.40.50.300">
    <property type="entry name" value="P-loop containing nucleotide triphosphate hydrolases"/>
    <property type="match status" value="1"/>
</dbReference>
<dbReference type="InterPro" id="IPR030378">
    <property type="entry name" value="G_CP_dom"/>
</dbReference>
<dbReference type="InterPro" id="IPR043358">
    <property type="entry name" value="GNL1-like"/>
</dbReference>
<dbReference type="InterPro" id="IPR006073">
    <property type="entry name" value="GTP-bd"/>
</dbReference>
<dbReference type="InterPro" id="IPR027417">
    <property type="entry name" value="P-loop_NTPase"/>
</dbReference>
<dbReference type="PANTHER" id="PTHR45709:SF3">
    <property type="entry name" value="GUANINE NUCLEOTIDE-BINDING PROTEIN-LIKE 1"/>
    <property type="match status" value="1"/>
</dbReference>
<dbReference type="PANTHER" id="PTHR45709">
    <property type="entry name" value="LARGE SUBUNIT GTPASE 1 HOMOLOG-RELATED"/>
    <property type="match status" value="1"/>
</dbReference>
<dbReference type="Pfam" id="PF01926">
    <property type="entry name" value="MMR_HSR1"/>
    <property type="match status" value="1"/>
</dbReference>
<dbReference type="SUPFAM" id="SSF52540">
    <property type="entry name" value="P-loop containing nucleoside triphosphate hydrolases"/>
    <property type="match status" value="1"/>
</dbReference>
<dbReference type="PROSITE" id="PS51721">
    <property type="entry name" value="G_CP"/>
    <property type="match status" value="1"/>
</dbReference>
<keyword id="KW-0025">Alternative splicing</keyword>
<keyword id="KW-0342">GTP-binding</keyword>
<keyword id="KW-0547">Nucleotide-binding</keyword>
<keyword id="KW-0597">Phosphoprotein</keyword>
<keyword id="KW-1185">Reference proteome</keyword>
<organism>
    <name type="scientific">Pan troglodytes</name>
    <name type="common">Chimpanzee</name>
    <dbReference type="NCBI Taxonomy" id="9598"/>
    <lineage>
        <taxon>Eukaryota</taxon>
        <taxon>Metazoa</taxon>
        <taxon>Chordata</taxon>
        <taxon>Craniata</taxon>
        <taxon>Vertebrata</taxon>
        <taxon>Euteleostomi</taxon>
        <taxon>Mammalia</taxon>
        <taxon>Eutheria</taxon>
        <taxon>Euarchontoglires</taxon>
        <taxon>Primates</taxon>
        <taxon>Haplorrhini</taxon>
        <taxon>Catarrhini</taxon>
        <taxon>Hominidae</taxon>
        <taxon>Pan</taxon>
    </lineage>
</organism>
<accession>Q7YR35</accession>
<accession>Q1XHW2</accession>
<comment type="function">
    <text evidence="1">Possible regulatory or functional link with the histocompatibility cluster.</text>
</comment>
<comment type="alternative products">
    <event type="alternative splicing"/>
    <isoform>
        <id>Q7YR35-1</id>
        <name>1</name>
        <sequence type="displayed"/>
    </isoform>
    <isoform>
        <id>Q7YR35-2</id>
        <name>2</name>
        <sequence type="described" ref="VSP_026996 VSP_026997"/>
    </isoform>
</comment>
<comment type="domain">
    <text>In contrast to other GTP-binding proteins, this family is characterized by a circular permutation of the GTPase motifs described by a G4-G1-G3 pattern.</text>
</comment>
<comment type="similarity">
    <text evidence="4">Belongs to the TRAFAC class YlqF/YawG GTPase family.</text>
</comment>
<comment type="sequence caution" evidence="6">
    <conflict type="erroneous gene model prediction">
        <sequence resource="EMBL-CDS" id="BAC78181"/>
    </conflict>
</comment>
<feature type="chain" id="PRO_0000122443" description="Guanine nucleotide-binding protein-like 1">
    <location>
        <begin position="1"/>
        <end position="607"/>
    </location>
</feature>
<feature type="domain" description="CP-type G" evidence="4">
    <location>
        <begin position="178"/>
        <end position="418"/>
    </location>
</feature>
<feature type="region of interest" description="Disordered" evidence="5">
    <location>
        <begin position="1"/>
        <end position="81"/>
    </location>
</feature>
<feature type="region of interest" description="Disordered" evidence="5">
    <location>
        <begin position="547"/>
        <end position="607"/>
    </location>
</feature>
<feature type="compositionally biased region" description="Basic residues" evidence="5">
    <location>
        <begin position="1"/>
        <end position="14"/>
    </location>
</feature>
<feature type="compositionally biased region" description="Basic and acidic residues" evidence="5">
    <location>
        <begin position="15"/>
        <end position="26"/>
    </location>
</feature>
<feature type="compositionally biased region" description="Acidic residues" evidence="5">
    <location>
        <begin position="550"/>
        <end position="584"/>
    </location>
</feature>
<feature type="binding site" evidence="3">
    <location>
        <begin position="225"/>
        <end position="228"/>
    </location>
    <ligand>
        <name>GTP</name>
        <dbReference type="ChEBI" id="CHEBI:37565"/>
    </ligand>
</feature>
<feature type="binding site" evidence="3">
    <location>
        <begin position="367"/>
        <end position="374"/>
    </location>
    <ligand>
        <name>GTP</name>
        <dbReference type="ChEBI" id="CHEBI:37565"/>
    </ligand>
</feature>
<feature type="binding site" evidence="3">
    <location>
        <begin position="411"/>
        <end position="415"/>
    </location>
    <ligand>
        <name>GTP</name>
        <dbReference type="ChEBI" id="CHEBI:37565"/>
    </ligand>
</feature>
<feature type="modified residue" description="Phosphoserine" evidence="2">
    <location>
        <position position="32"/>
    </location>
</feature>
<feature type="modified residue" description="Phosphoserine" evidence="2">
    <location>
        <position position="33"/>
    </location>
</feature>
<feature type="modified residue" description="Phosphoserine" evidence="2">
    <location>
        <position position="34"/>
    </location>
</feature>
<feature type="modified residue" description="Phosphothreonine" evidence="2">
    <location>
        <position position="48"/>
    </location>
</feature>
<feature type="modified residue" description="Phosphothreonine" evidence="2">
    <location>
        <position position="50"/>
    </location>
</feature>
<feature type="modified residue" description="Phosphoserine" evidence="2">
    <location>
        <position position="51"/>
    </location>
</feature>
<feature type="modified residue" description="Phosphoserine" evidence="2">
    <location>
        <position position="68"/>
    </location>
</feature>
<feature type="modified residue" description="Phosphoserine" evidence="2">
    <location>
        <position position="324"/>
    </location>
</feature>
<feature type="modified residue" description="Phosphoserine" evidence="2">
    <location>
        <position position="561"/>
    </location>
</feature>
<feature type="modified residue" description="Phosphoserine" evidence="2">
    <location>
        <position position="562"/>
    </location>
</feature>
<feature type="modified residue" description="Phosphoserine" evidence="2">
    <location>
        <position position="563"/>
    </location>
</feature>
<feature type="splice variant" id="VSP_026996" description="In isoform 2." evidence="6">
    <location>
        <begin position="1"/>
        <end position="177"/>
    </location>
</feature>
<feature type="splice variant" id="VSP_026997" description="In isoform 2." evidence="6">
    <original>WRQLWR</original>
    <variation>MEAAVA</variation>
    <location>
        <begin position="178"/>
        <end position="183"/>
    </location>
</feature>
<reference key="1">
    <citation type="journal article" date="2003" name="Proc. Natl. Acad. Sci. U.S.A.">
        <title>Comparative sequencing of human and chimpanzee MHC class I regions unveils insertions/deletions as the major path to genomic divergence.</title>
        <authorList>
            <person name="Anzai T."/>
            <person name="Shiina T."/>
            <person name="Kimura N."/>
            <person name="Yanagiya K."/>
            <person name="Kohara S."/>
            <person name="Shigenari A."/>
            <person name="Yamagata T."/>
            <person name="Kulski J.K."/>
            <person name="Naruse T.K."/>
            <person name="Fujimori Y."/>
            <person name="Fukuzumi Y."/>
            <person name="Yamazaki M."/>
            <person name="Tashiro H."/>
            <person name="Iwamoto C."/>
            <person name="Umehara Y."/>
            <person name="Imanishi T."/>
            <person name="Meyer A."/>
            <person name="Ikeo K."/>
            <person name="Gojobori T."/>
            <person name="Bahram S."/>
            <person name="Inoko H."/>
        </authorList>
    </citation>
    <scope>NUCLEOTIDE SEQUENCE [LARGE SCALE GENOMIC DNA]</scope>
</reference>
<reference key="2">
    <citation type="journal article" date="2006" name="Genetics">
        <title>Rapid evolution of major histocompatibility complex class I genes in primates generates new disease alleles in humans via hitchhiking diversity.</title>
        <authorList>
            <person name="Shiina T."/>
            <person name="Ota M."/>
            <person name="Shimizu S."/>
            <person name="Katsuyama Y."/>
            <person name="Hashimoto N."/>
            <person name="Takasu M."/>
            <person name="Anzai T."/>
            <person name="Kulski J.K."/>
            <person name="Kikkawa E."/>
            <person name="Naruse T."/>
            <person name="Kimura N."/>
            <person name="Yanagiya K."/>
            <person name="Watanabe A."/>
            <person name="Hosomichi K."/>
            <person name="Kohara S."/>
            <person name="Iwamoto C."/>
            <person name="Umehara Y."/>
            <person name="Meyer A."/>
            <person name="Wanner V."/>
            <person name="Sano K."/>
            <person name="Macquin C."/>
            <person name="Ikeo K."/>
            <person name="Tokunaga K."/>
            <person name="Gojobori T."/>
            <person name="Inoko H."/>
            <person name="Bahram S."/>
        </authorList>
    </citation>
    <scope>NUCLEOTIDE SEQUENCE [LARGE SCALE GENOMIC DNA]</scope>
</reference>